<dbReference type="EC" id="7.5.2.6" evidence="1"/>
<dbReference type="EMBL" id="AE014075">
    <property type="protein sequence ID" value="AAN79524.1"/>
    <property type="molecule type" value="Genomic_DNA"/>
</dbReference>
<dbReference type="RefSeq" id="WP_000551259.1">
    <property type="nucleotide sequence ID" value="NZ_CP051263.1"/>
</dbReference>
<dbReference type="PDB" id="6BPL">
    <property type="method" value="X-ray"/>
    <property type="resolution" value="2.91 A"/>
    <property type="chains" value="A/B=2-582"/>
</dbReference>
<dbReference type="PDB" id="6BPP">
    <property type="method" value="X-ray"/>
    <property type="resolution" value="2.92 A"/>
    <property type="chains" value="A/B=2-582"/>
</dbReference>
<dbReference type="PDBsum" id="6BPL"/>
<dbReference type="PDBsum" id="6BPP"/>
<dbReference type="SMR" id="Q8FJB1"/>
<dbReference type="STRING" id="199310.c1054"/>
<dbReference type="KEGG" id="ecc:c1054"/>
<dbReference type="eggNOG" id="COG1132">
    <property type="taxonomic scope" value="Bacteria"/>
</dbReference>
<dbReference type="HOGENOM" id="CLU_000604_84_3_6"/>
<dbReference type="BioCyc" id="ECOL199310:C1054-MONOMER"/>
<dbReference type="Proteomes" id="UP000001410">
    <property type="component" value="Chromosome"/>
</dbReference>
<dbReference type="GO" id="GO:0005886">
    <property type="term" value="C:plasma membrane"/>
    <property type="evidence" value="ECO:0007669"/>
    <property type="project" value="UniProtKB-SubCell"/>
</dbReference>
<dbReference type="GO" id="GO:0015421">
    <property type="term" value="F:ABC-type oligopeptide transporter activity"/>
    <property type="evidence" value="ECO:0007669"/>
    <property type="project" value="TreeGrafter"/>
</dbReference>
<dbReference type="GO" id="GO:0005524">
    <property type="term" value="F:ATP binding"/>
    <property type="evidence" value="ECO:0007669"/>
    <property type="project" value="UniProtKB-KW"/>
</dbReference>
<dbReference type="GO" id="GO:0016887">
    <property type="term" value="F:ATP hydrolysis activity"/>
    <property type="evidence" value="ECO:0007669"/>
    <property type="project" value="InterPro"/>
</dbReference>
<dbReference type="GO" id="GO:0034040">
    <property type="term" value="F:ATPase-coupled lipid transmembrane transporter activity"/>
    <property type="evidence" value="ECO:0007669"/>
    <property type="project" value="InterPro"/>
</dbReference>
<dbReference type="CDD" id="cd18552">
    <property type="entry name" value="ABC_6TM_MsbA_like"/>
    <property type="match status" value="1"/>
</dbReference>
<dbReference type="CDD" id="cd03251">
    <property type="entry name" value="ABCC_MsbA"/>
    <property type="match status" value="1"/>
</dbReference>
<dbReference type="FunFam" id="1.20.1560.10:FF:000008">
    <property type="entry name" value="Lipid A export ATP-binding/permease protein MsbA"/>
    <property type="match status" value="1"/>
</dbReference>
<dbReference type="FunFam" id="3.40.50.300:FF:000140">
    <property type="entry name" value="Lipid A export ATP-binding/permease protein MsbA"/>
    <property type="match status" value="1"/>
</dbReference>
<dbReference type="Gene3D" id="1.20.1560.10">
    <property type="entry name" value="ABC transporter type 1, transmembrane domain"/>
    <property type="match status" value="1"/>
</dbReference>
<dbReference type="Gene3D" id="3.40.50.300">
    <property type="entry name" value="P-loop containing nucleotide triphosphate hydrolases"/>
    <property type="match status" value="1"/>
</dbReference>
<dbReference type="InterPro" id="IPR003593">
    <property type="entry name" value="AAA+_ATPase"/>
</dbReference>
<dbReference type="InterPro" id="IPR011527">
    <property type="entry name" value="ABC1_TM_dom"/>
</dbReference>
<dbReference type="InterPro" id="IPR036640">
    <property type="entry name" value="ABC1_TM_sf"/>
</dbReference>
<dbReference type="InterPro" id="IPR003439">
    <property type="entry name" value="ABC_transporter-like_ATP-bd"/>
</dbReference>
<dbReference type="InterPro" id="IPR017871">
    <property type="entry name" value="ABC_transporter-like_CS"/>
</dbReference>
<dbReference type="InterPro" id="IPR011917">
    <property type="entry name" value="ABC_transpr_lipidA"/>
</dbReference>
<dbReference type="InterPro" id="IPR027417">
    <property type="entry name" value="P-loop_NTPase"/>
</dbReference>
<dbReference type="InterPro" id="IPR039421">
    <property type="entry name" value="Type_1_exporter"/>
</dbReference>
<dbReference type="NCBIfam" id="TIGR02203">
    <property type="entry name" value="MsbA_lipidA"/>
    <property type="match status" value="1"/>
</dbReference>
<dbReference type="NCBIfam" id="NF008381">
    <property type="entry name" value="PRK11176.1"/>
    <property type="match status" value="1"/>
</dbReference>
<dbReference type="PANTHER" id="PTHR43394:SF1">
    <property type="entry name" value="ATP-BINDING CASSETTE SUB-FAMILY B MEMBER 10, MITOCHONDRIAL"/>
    <property type="match status" value="1"/>
</dbReference>
<dbReference type="PANTHER" id="PTHR43394">
    <property type="entry name" value="ATP-DEPENDENT PERMEASE MDL1, MITOCHONDRIAL"/>
    <property type="match status" value="1"/>
</dbReference>
<dbReference type="Pfam" id="PF00664">
    <property type="entry name" value="ABC_membrane"/>
    <property type="match status" value="1"/>
</dbReference>
<dbReference type="Pfam" id="PF00005">
    <property type="entry name" value="ABC_tran"/>
    <property type="match status" value="1"/>
</dbReference>
<dbReference type="SMART" id="SM00382">
    <property type="entry name" value="AAA"/>
    <property type="match status" value="1"/>
</dbReference>
<dbReference type="SUPFAM" id="SSF90123">
    <property type="entry name" value="ABC transporter transmembrane region"/>
    <property type="match status" value="1"/>
</dbReference>
<dbReference type="SUPFAM" id="SSF52540">
    <property type="entry name" value="P-loop containing nucleoside triphosphate hydrolases"/>
    <property type="match status" value="1"/>
</dbReference>
<dbReference type="PROSITE" id="PS50929">
    <property type="entry name" value="ABC_TM1F"/>
    <property type="match status" value="1"/>
</dbReference>
<dbReference type="PROSITE" id="PS00211">
    <property type="entry name" value="ABC_TRANSPORTER_1"/>
    <property type="match status" value="1"/>
</dbReference>
<dbReference type="PROSITE" id="PS50893">
    <property type="entry name" value="ABC_TRANSPORTER_2"/>
    <property type="match status" value="1"/>
</dbReference>
<dbReference type="PROSITE" id="PS51239">
    <property type="entry name" value="MSBA"/>
    <property type="match status" value="1"/>
</dbReference>
<gene>
    <name evidence="1" type="primary">msbA</name>
    <name type="ordered locus">c1054</name>
</gene>
<name>MSBA_ECOL6</name>
<reference key="1">
    <citation type="journal article" date="2002" name="Proc. Natl. Acad. Sci. U.S.A.">
        <title>Extensive mosaic structure revealed by the complete genome sequence of uropathogenic Escherichia coli.</title>
        <authorList>
            <person name="Welch R.A."/>
            <person name="Burland V."/>
            <person name="Plunkett G. III"/>
            <person name="Redford P."/>
            <person name="Roesch P."/>
            <person name="Rasko D."/>
            <person name="Buckles E.L."/>
            <person name="Liou S.-R."/>
            <person name="Boutin A."/>
            <person name="Hackett J."/>
            <person name="Stroud D."/>
            <person name="Mayhew G.F."/>
            <person name="Rose D.J."/>
            <person name="Zhou S."/>
            <person name="Schwartz D.C."/>
            <person name="Perna N.T."/>
            <person name="Mobley H.L.T."/>
            <person name="Donnenberg M.S."/>
            <person name="Blattner F.R."/>
        </authorList>
    </citation>
    <scope>NUCLEOTIDE SEQUENCE [LARGE SCALE GENOMIC DNA]</scope>
    <source>
        <strain>CFT073 / ATCC 700928 / UPEC</strain>
    </source>
</reference>
<proteinExistence type="evidence at protein level"/>
<keyword id="KW-0002">3D-structure</keyword>
<keyword id="KW-0067">ATP-binding</keyword>
<keyword id="KW-0997">Cell inner membrane</keyword>
<keyword id="KW-1003">Cell membrane</keyword>
<keyword id="KW-0445">Lipid transport</keyword>
<keyword id="KW-0472">Membrane</keyword>
<keyword id="KW-0547">Nucleotide-binding</keyword>
<keyword id="KW-1185">Reference proteome</keyword>
<keyword id="KW-1278">Translocase</keyword>
<keyword id="KW-0812">Transmembrane</keyword>
<keyword id="KW-1133">Transmembrane helix</keyword>
<keyword id="KW-0813">Transport</keyword>
<comment type="function">
    <text evidence="1">Involved in lipopolysaccharide (LPS) biosynthesis. Translocates lipid A-core from the inner to the outer leaflet of the inner membrane. Transmembrane domains (TMD) form a pore in the inner membrane and the ATP-binding domain (NBD) is responsible for energy generation.</text>
</comment>
<comment type="catalytic activity">
    <reaction evidence="1">
        <text>ATP + H2O + lipid A-core oligosaccharideSide 1 = ADP + phosphate + lipid A-core oligosaccharideSide 2.</text>
        <dbReference type="EC" id="7.5.2.6"/>
    </reaction>
</comment>
<comment type="subunit">
    <text evidence="1">Homodimer.</text>
</comment>
<comment type="subcellular location">
    <subcellularLocation>
        <location evidence="1">Cell inner membrane</location>
        <topology evidence="1">Multi-pass membrane protein</topology>
    </subcellularLocation>
</comment>
<comment type="domain">
    <text evidence="1">In MsbA the ATP-binding domain (NBD) and the transmembrane domain (TMD) are fused.</text>
</comment>
<comment type="similarity">
    <text evidence="1">Belongs to the ABC transporter superfamily. Lipid exporter (TC 3.A.1.106) family.</text>
</comment>
<evidence type="ECO:0000255" key="1">
    <source>
        <dbReference type="HAMAP-Rule" id="MF_01703"/>
    </source>
</evidence>
<evidence type="ECO:0007829" key="2">
    <source>
        <dbReference type="PDB" id="6BPL"/>
    </source>
</evidence>
<evidence type="ECO:0007829" key="3">
    <source>
        <dbReference type="PDB" id="6BPP"/>
    </source>
</evidence>
<protein>
    <recommendedName>
        <fullName evidence="1">ATP-dependent lipid A-core flippase</fullName>
        <ecNumber evidence="1">7.5.2.6</ecNumber>
    </recommendedName>
    <alternativeName>
        <fullName evidence="1">Lipid A export ATP-binding/permease protein MsbA</fullName>
    </alternativeName>
</protein>
<feature type="chain" id="PRO_0000092578" description="ATP-dependent lipid A-core flippase">
    <location>
        <begin position="1"/>
        <end position="582"/>
    </location>
</feature>
<feature type="transmembrane region" description="Helical" evidence="1">
    <location>
        <begin position="16"/>
        <end position="36"/>
    </location>
</feature>
<feature type="transmembrane region" description="Helical" evidence="1">
    <location>
        <begin position="64"/>
        <end position="84"/>
    </location>
</feature>
<feature type="transmembrane region" description="Helical" evidence="1">
    <location>
        <begin position="153"/>
        <end position="173"/>
    </location>
</feature>
<feature type="transmembrane region" description="Helical" evidence="1">
    <location>
        <begin position="253"/>
        <end position="273"/>
    </location>
</feature>
<feature type="transmembrane region" description="Helical" evidence="1">
    <location>
        <begin position="275"/>
        <end position="295"/>
    </location>
</feature>
<feature type="domain" description="ABC transmembrane type-1" evidence="1">
    <location>
        <begin position="28"/>
        <end position="310"/>
    </location>
</feature>
<feature type="domain" description="ABC transporter" evidence="1">
    <location>
        <begin position="342"/>
        <end position="578"/>
    </location>
</feature>
<feature type="binding site" evidence="1">
    <location>
        <begin position="376"/>
        <end position="383"/>
    </location>
    <ligand>
        <name>ATP</name>
        <dbReference type="ChEBI" id="CHEBI:30616"/>
    </ligand>
</feature>
<feature type="helix" evidence="2">
    <location>
        <begin position="5"/>
        <end position="20"/>
    </location>
</feature>
<feature type="helix" evidence="2">
    <location>
        <begin position="21"/>
        <end position="23"/>
    </location>
</feature>
<feature type="helix" evidence="2">
    <location>
        <begin position="24"/>
        <end position="46"/>
    </location>
</feature>
<feature type="helix" evidence="2">
    <location>
        <begin position="48"/>
        <end position="53"/>
    </location>
</feature>
<feature type="turn" evidence="2">
    <location>
        <begin position="54"/>
        <end position="58"/>
    </location>
</feature>
<feature type="helix" evidence="2">
    <location>
        <begin position="60"/>
        <end position="64"/>
    </location>
</feature>
<feature type="helix" evidence="2">
    <location>
        <begin position="67"/>
        <end position="109"/>
    </location>
</feature>
<feature type="helix" evidence="2">
    <location>
        <begin position="114"/>
        <end position="118"/>
    </location>
</feature>
<feature type="helix" evidence="2">
    <location>
        <begin position="121"/>
        <end position="162"/>
    </location>
</feature>
<feature type="helix" evidence="2">
    <location>
        <begin position="165"/>
        <end position="189"/>
    </location>
</feature>
<feature type="helix" evidence="2">
    <location>
        <begin position="193"/>
        <end position="212"/>
    </location>
</feature>
<feature type="helix" evidence="2">
    <location>
        <begin position="214"/>
        <end position="220"/>
    </location>
</feature>
<feature type="helix" evidence="2">
    <location>
        <begin position="223"/>
        <end position="270"/>
    </location>
</feature>
<feature type="helix" evidence="2">
    <location>
        <begin position="273"/>
        <end position="276"/>
    </location>
</feature>
<feature type="helix" evidence="2">
    <location>
        <begin position="281"/>
        <end position="293"/>
    </location>
</feature>
<feature type="helix" evidence="2">
    <location>
        <begin position="295"/>
        <end position="301"/>
    </location>
</feature>
<feature type="helix" evidence="2">
    <location>
        <begin position="304"/>
        <end position="323"/>
    </location>
</feature>
<feature type="strand" evidence="2">
    <location>
        <begin position="342"/>
        <end position="349"/>
    </location>
</feature>
<feature type="strand" evidence="2">
    <location>
        <begin position="358"/>
        <end position="366"/>
    </location>
</feature>
<feature type="strand" evidence="2">
    <location>
        <begin position="371"/>
        <end position="377"/>
    </location>
</feature>
<feature type="helix" evidence="2">
    <location>
        <begin position="382"/>
        <end position="389"/>
    </location>
</feature>
<feature type="strand" evidence="2">
    <location>
        <begin position="396"/>
        <end position="406"/>
    </location>
</feature>
<feature type="helix" evidence="2">
    <location>
        <begin position="407"/>
        <end position="409"/>
    </location>
</feature>
<feature type="helix" evidence="2">
    <location>
        <begin position="412"/>
        <end position="417"/>
    </location>
</feature>
<feature type="strand" evidence="2">
    <location>
        <begin position="418"/>
        <end position="423"/>
    </location>
</feature>
<feature type="strand" evidence="2">
    <location>
        <begin position="430"/>
        <end position="432"/>
    </location>
</feature>
<feature type="helix" evidence="2">
    <location>
        <begin position="433"/>
        <end position="437"/>
    </location>
</feature>
<feature type="turn" evidence="2">
    <location>
        <begin position="438"/>
        <end position="440"/>
    </location>
</feature>
<feature type="turn" evidence="2">
    <location>
        <begin position="442"/>
        <end position="444"/>
    </location>
</feature>
<feature type="helix" evidence="2">
    <location>
        <begin position="447"/>
        <end position="456"/>
    </location>
</feature>
<feature type="helix" evidence="2">
    <location>
        <begin position="460"/>
        <end position="463"/>
    </location>
</feature>
<feature type="strand" evidence="2">
    <location>
        <begin position="466"/>
        <end position="468"/>
    </location>
</feature>
<feature type="helix" evidence="2">
    <location>
        <begin position="469"/>
        <end position="471"/>
    </location>
</feature>
<feature type="strand" evidence="2">
    <location>
        <begin position="472"/>
        <end position="474"/>
    </location>
</feature>
<feature type="turn" evidence="2">
    <location>
        <begin position="476"/>
        <end position="480"/>
    </location>
</feature>
<feature type="helix" evidence="2">
    <location>
        <begin position="483"/>
        <end position="497"/>
    </location>
</feature>
<feature type="strand" evidence="2">
    <location>
        <begin position="500"/>
        <end position="505"/>
    </location>
</feature>
<feature type="strand" evidence="3">
    <location>
        <begin position="507"/>
        <end position="509"/>
    </location>
</feature>
<feature type="helix" evidence="2">
    <location>
        <begin position="517"/>
        <end position="527"/>
    </location>
</feature>
<feature type="strand" evidence="2">
    <location>
        <begin position="528"/>
        <end position="535"/>
    </location>
</feature>
<feature type="helix" evidence="2">
    <location>
        <begin position="539"/>
        <end position="544"/>
    </location>
</feature>
<feature type="strand" evidence="2">
    <location>
        <begin position="546"/>
        <end position="552"/>
    </location>
</feature>
<feature type="strand" evidence="2">
    <location>
        <begin position="555"/>
        <end position="560"/>
    </location>
</feature>
<feature type="helix" evidence="2">
    <location>
        <begin position="562"/>
        <end position="568"/>
    </location>
</feature>
<feature type="helix" evidence="2">
    <location>
        <begin position="571"/>
        <end position="578"/>
    </location>
</feature>
<organism>
    <name type="scientific">Escherichia coli O6:H1 (strain CFT073 / ATCC 700928 / UPEC)</name>
    <dbReference type="NCBI Taxonomy" id="199310"/>
    <lineage>
        <taxon>Bacteria</taxon>
        <taxon>Pseudomonadati</taxon>
        <taxon>Pseudomonadota</taxon>
        <taxon>Gammaproteobacteria</taxon>
        <taxon>Enterobacterales</taxon>
        <taxon>Enterobacteriaceae</taxon>
        <taxon>Escherichia</taxon>
    </lineage>
</organism>
<accession>Q8FJB1</accession>
<sequence length="582" mass="64507">MHNDKDLSTWQTFRRLWPTIAPFKAGLIVAGVALILNAASDTFMLSLLKPLLDDGFGKTDRSVLMWMPLVVIGLMILRGITSYISSYCISWVSGKVVMTMRRRLFGHMMGMPVSFFDKQSTGTLLSRITYDSEQVASSSSGALITVVREGASIIGLFIMMFYYSWQLSIILIVLAPIVSIAIRVVSKRFRNISKNMQNTMGQVTTSAEQMLKGHKEVLIFGGQEVETKRFDKVSNRMRLQGMKMVSASSISDPIIQLIASLALAFVLYAASFPSVMDSLTAGTITVVFSSMIALMRPLKSLTNVNAQFQRGMAACQTLFTILDSEQEKDEGKRVIERATGDVEFRNVTFTYPGRDVPALRNINLKIPAGKTVALVGRSGSGKSTIASLITRFYDIDEGEILMDGHDLREYTLASLRNQVALVSQNVHLFNDTVANNIAYARTEQYSREQIEEAARMAYAMDFINKMDNGLDTVIGENGVLLSGGQRQRIAIARALLRDSPILILDEATSALDTESERAIQAALDELQKNRTSLVIAHRLSTIEKADEIVVVEDGVIVERGTHNDLLEHRGVYAQLHKMQFGQ</sequence>